<keyword id="KW-0325">Glycoprotein</keyword>
<keyword id="KW-0472">Membrane</keyword>
<keyword id="KW-0653">Protein transport</keyword>
<keyword id="KW-1185">Reference proteome</keyword>
<keyword id="KW-0812">Transmembrane</keyword>
<keyword id="KW-1133">Transmembrane helix</keyword>
<keyword id="KW-0813">Transport</keyword>
<protein>
    <recommendedName>
        <fullName>Dual oxidase maturation factor 1</fullName>
    </recommendedName>
    <alternativeName>
        <fullName>Dual oxidase activator 1</fullName>
    </alternativeName>
</protein>
<reference key="1">
    <citation type="submission" date="2006-08" db="EMBL/GenBank/DDBJ databases">
        <authorList>
            <consortium name="NIH - Xenopus Gene Collection (XGC) project"/>
        </authorList>
    </citation>
    <scope>NUCLEOTIDE SEQUENCE [LARGE SCALE MRNA]</scope>
    <source>
        <strain>N6</strain>
        <tissue>Skin</tissue>
    </source>
</reference>
<name>DOXA1_XENTR</name>
<feature type="chain" id="PRO_0000264244" description="Dual oxidase maturation factor 1">
    <location>
        <begin position="1"/>
        <end position="308"/>
    </location>
</feature>
<feature type="topological domain" description="Extracellular" evidence="2">
    <location>
        <begin position="1"/>
        <end position="21"/>
    </location>
</feature>
<feature type="transmembrane region" description="Helical" evidence="2">
    <location>
        <begin position="22"/>
        <end position="42"/>
    </location>
</feature>
<feature type="topological domain" description="Cytoplasmic" evidence="2">
    <location>
        <begin position="43"/>
        <end position="49"/>
    </location>
</feature>
<feature type="transmembrane region" description="Helical" evidence="2">
    <location>
        <begin position="50"/>
        <end position="70"/>
    </location>
</feature>
<feature type="topological domain" description="Extracellular" evidence="2">
    <location>
        <begin position="71"/>
        <end position="172"/>
    </location>
</feature>
<feature type="transmembrane region" description="Helical" evidence="2">
    <location>
        <begin position="173"/>
        <end position="195"/>
    </location>
</feature>
<feature type="topological domain" description="Cytoplasmic" evidence="2">
    <location>
        <begin position="196"/>
        <end position="199"/>
    </location>
</feature>
<feature type="transmembrane region" description="Helical" evidence="2">
    <location>
        <begin position="200"/>
        <end position="220"/>
    </location>
</feature>
<feature type="topological domain" description="Extracellular" evidence="2">
    <location>
        <begin position="221"/>
        <end position="247"/>
    </location>
</feature>
<feature type="transmembrane region" description="Helical" evidence="2">
    <location>
        <begin position="248"/>
        <end position="268"/>
    </location>
</feature>
<feature type="topological domain" description="Cytoplasmic" evidence="2">
    <location>
        <begin position="269"/>
        <end position="308"/>
    </location>
</feature>
<feature type="glycosylation site" description="N-linked (GlcNAc...) asparagine" evidence="2">
    <location>
        <position position="94"/>
    </location>
</feature>
<feature type="glycosylation site" description="N-linked (GlcNAc...) asparagine" evidence="2">
    <location>
        <position position="107"/>
    </location>
</feature>
<feature type="glycosylation site" description="N-linked (GlcNAc...) asparagine" evidence="2">
    <location>
        <position position="119"/>
    </location>
</feature>
<comment type="function">
    <text evidence="1">Possible role in maturation and transport from the endoplasmic reticulum to the plasma membrane of functional dual oxidase.</text>
</comment>
<comment type="subcellular location">
    <subcellularLocation>
        <location evidence="3">Membrane</location>
        <topology evidence="3">Multi-pass membrane protein</topology>
    </subcellularLocation>
</comment>
<comment type="similarity">
    <text evidence="3">Belongs to the DUOXA family.</text>
</comment>
<organism>
    <name type="scientific">Xenopus tropicalis</name>
    <name type="common">Western clawed frog</name>
    <name type="synonym">Silurana tropicalis</name>
    <dbReference type="NCBI Taxonomy" id="8364"/>
    <lineage>
        <taxon>Eukaryota</taxon>
        <taxon>Metazoa</taxon>
        <taxon>Chordata</taxon>
        <taxon>Craniata</taxon>
        <taxon>Vertebrata</taxon>
        <taxon>Euteleostomi</taxon>
        <taxon>Amphibia</taxon>
        <taxon>Batrachia</taxon>
        <taxon>Anura</taxon>
        <taxon>Pipoidea</taxon>
        <taxon>Pipidae</taxon>
        <taxon>Xenopodinae</taxon>
        <taxon>Xenopus</taxon>
        <taxon>Silurana</taxon>
    </lineage>
</organism>
<dbReference type="EMBL" id="BC122088">
    <property type="protein sequence ID" value="AAI22089.1"/>
    <property type="molecule type" value="mRNA"/>
</dbReference>
<dbReference type="RefSeq" id="NP_001072563.1">
    <property type="nucleotide sequence ID" value="NM_001079095.1"/>
</dbReference>
<dbReference type="RefSeq" id="XP_031753930.1">
    <property type="nucleotide sequence ID" value="XM_031898070.1"/>
</dbReference>
<dbReference type="SMR" id="Q0P4G7"/>
<dbReference type="FunCoup" id="Q0P4G7">
    <property type="interactions" value="147"/>
</dbReference>
<dbReference type="STRING" id="8364.ENSXETP00000040820"/>
<dbReference type="GlyCosmos" id="Q0P4G7">
    <property type="glycosylation" value="3 sites, No reported glycans"/>
</dbReference>
<dbReference type="PaxDb" id="8364-ENSXETP00000051522"/>
<dbReference type="GeneID" id="780018"/>
<dbReference type="KEGG" id="xtr:780018"/>
<dbReference type="AGR" id="Xenbase:XB-GENE-990812"/>
<dbReference type="CTD" id="90527"/>
<dbReference type="Xenbase" id="XB-GENE-990812">
    <property type="gene designation" value="duoxa1"/>
</dbReference>
<dbReference type="eggNOG" id="KOG3921">
    <property type="taxonomic scope" value="Eukaryota"/>
</dbReference>
<dbReference type="HOGENOM" id="CLU_045258_0_0_1"/>
<dbReference type="InParanoid" id="Q0P4G7"/>
<dbReference type="OMA" id="MHAFVIF"/>
<dbReference type="OrthoDB" id="10042652at2759"/>
<dbReference type="PhylomeDB" id="Q0P4G7"/>
<dbReference type="TreeFam" id="TF312996"/>
<dbReference type="Proteomes" id="UP000008143">
    <property type="component" value="Chromosome 3"/>
</dbReference>
<dbReference type="Bgee" id="ENSXETG00000023900">
    <property type="expression patterns" value="Expressed in skin of body and 1 other cell type or tissue"/>
</dbReference>
<dbReference type="GO" id="GO:0005789">
    <property type="term" value="C:endoplasmic reticulum membrane"/>
    <property type="evidence" value="ECO:0007669"/>
    <property type="project" value="InterPro"/>
</dbReference>
<dbReference type="GO" id="GO:0015031">
    <property type="term" value="P:protein transport"/>
    <property type="evidence" value="ECO:0007669"/>
    <property type="project" value="UniProtKB-KW"/>
</dbReference>
<dbReference type="InterPro" id="IPR018469">
    <property type="entry name" value="Dual_oxidase_maturation_fac"/>
</dbReference>
<dbReference type="PANTHER" id="PTHR31158">
    <property type="entry name" value="DUAL OXIDASE 2"/>
    <property type="match status" value="1"/>
</dbReference>
<dbReference type="PANTHER" id="PTHR31158:SF12">
    <property type="entry name" value="DUAL OXIDASE MATURATION FACTOR 1"/>
    <property type="match status" value="1"/>
</dbReference>
<dbReference type="Pfam" id="PF10204">
    <property type="entry name" value="DuoxA"/>
    <property type="match status" value="1"/>
</dbReference>
<proteinExistence type="evidence at transcript level"/>
<sequence length="308" mass="34937">MQANIFPFYPQPRTSFKFDTKIIEIIIICIVTACTFIIILPGIRGKSRSIWLFRILTSLFIGAVILAVNFTSDWETGIVTATTVYKSFSHSMLNASIGLWIGLKGVNITLIGNPVYQLNETINYNEEFAWESANQFDKNYKDGLERGLPYPILYVAEKFTINSPCGLFQQYCISTYYSSEIMWVAFGSWILYNVLFSMPVILYGICMMFVTAICMLVSLISFASVRQAPVCNIHFGNAVLKTHFGVSYWLSLVTGLFCLIVSLVLLFLYKTQPKVIRLIFSYGEEEDLSDKSENEEEHSSALSLNEML</sequence>
<accession>Q0P4G7</accession>
<gene>
    <name type="primary">duoxa1</name>
</gene>
<evidence type="ECO:0000250" key="1"/>
<evidence type="ECO:0000255" key="2"/>
<evidence type="ECO:0000305" key="3"/>